<proteinExistence type="evidence at transcript level"/>
<feature type="chain" id="PRO_0000314049" description="Serine/threonine-protein kinase Nek5">
    <location>
        <begin position="1"/>
        <end position="943"/>
    </location>
</feature>
<feature type="domain" description="Protein kinase" evidence="1">
    <location>
        <begin position="8"/>
        <end position="262"/>
    </location>
</feature>
<feature type="region of interest" description="Disordered" evidence="3">
    <location>
        <begin position="284"/>
        <end position="385"/>
    </location>
</feature>
<feature type="region of interest" description="Disordered" evidence="3">
    <location>
        <begin position="398"/>
        <end position="538"/>
    </location>
</feature>
<feature type="compositionally biased region" description="Low complexity" evidence="3">
    <location>
        <begin position="288"/>
        <end position="329"/>
    </location>
</feature>
<feature type="compositionally biased region" description="Basic and acidic residues" evidence="3">
    <location>
        <begin position="337"/>
        <end position="356"/>
    </location>
</feature>
<feature type="compositionally biased region" description="Basic and acidic residues" evidence="3">
    <location>
        <begin position="362"/>
        <end position="384"/>
    </location>
</feature>
<feature type="compositionally biased region" description="Polar residues" evidence="3">
    <location>
        <begin position="402"/>
        <end position="422"/>
    </location>
</feature>
<feature type="compositionally biased region" description="Basic and acidic residues" evidence="3">
    <location>
        <begin position="423"/>
        <end position="432"/>
    </location>
</feature>
<feature type="compositionally biased region" description="Basic and acidic residues" evidence="3">
    <location>
        <begin position="474"/>
        <end position="484"/>
    </location>
</feature>
<feature type="compositionally biased region" description="Low complexity" evidence="3">
    <location>
        <begin position="510"/>
        <end position="520"/>
    </location>
</feature>
<feature type="active site" description="Proton acceptor" evidence="1 2">
    <location>
        <position position="133"/>
    </location>
</feature>
<feature type="binding site" evidence="1">
    <location>
        <begin position="14"/>
        <end position="22"/>
    </location>
    <ligand>
        <name>ATP</name>
        <dbReference type="ChEBI" id="CHEBI:30616"/>
    </ligand>
</feature>
<feature type="binding site" evidence="1">
    <location>
        <position position="37"/>
    </location>
    <ligand>
        <name>ATP</name>
        <dbReference type="ChEBI" id="CHEBI:30616"/>
    </ligand>
</feature>
<dbReference type="EC" id="2.7.11.1" evidence="6"/>
<dbReference type="EMBL" id="AP003270">
    <property type="protein sequence ID" value="BAC01197.1"/>
    <property type="molecule type" value="Genomic_DNA"/>
</dbReference>
<dbReference type="EMBL" id="AP003611">
    <property type="protein sequence ID" value="BAB63817.1"/>
    <property type="molecule type" value="Genomic_DNA"/>
</dbReference>
<dbReference type="EMBL" id="AP008207">
    <property type="protein sequence ID" value="BAF06810.2"/>
    <property type="status" value="ALT_SEQ"/>
    <property type="molecule type" value="Genomic_DNA"/>
</dbReference>
<dbReference type="EMBL" id="AP014957">
    <property type="status" value="NOT_ANNOTATED_CDS"/>
    <property type="molecule type" value="Genomic_DNA"/>
</dbReference>
<dbReference type="EMBL" id="CM000138">
    <property type="protein sequence ID" value="EAZ14261.1"/>
    <property type="molecule type" value="Genomic_DNA"/>
</dbReference>
<dbReference type="RefSeq" id="XP_015621068.1">
    <property type="nucleotide sequence ID" value="XM_015765582.1"/>
</dbReference>
<dbReference type="RefSeq" id="XP_015621069.1">
    <property type="nucleotide sequence ID" value="XM_015765583.1"/>
</dbReference>
<dbReference type="RefSeq" id="XP_015621070.1">
    <property type="nucleotide sequence ID" value="XM_015765584.1"/>
</dbReference>
<dbReference type="SMR" id="Q94CU5"/>
<dbReference type="FunCoup" id="Q94CU5">
    <property type="interactions" value="1402"/>
</dbReference>
<dbReference type="STRING" id="39947.Q94CU5"/>
<dbReference type="PaxDb" id="39947-Q94CU5"/>
<dbReference type="GeneID" id="4324792"/>
<dbReference type="KEGG" id="dosa:Os01g0864700"/>
<dbReference type="KEGG" id="osa:4324792"/>
<dbReference type="eggNOG" id="KOG0589">
    <property type="taxonomic scope" value="Eukaryota"/>
</dbReference>
<dbReference type="InParanoid" id="Q94CU5"/>
<dbReference type="OrthoDB" id="248923at2759"/>
<dbReference type="Proteomes" id="UP000000763">
    <property type="component" value="Chromosome 1"/>
</dbReference>
<dbReference type="Proteomes" id="UP000007752">
    <property type="component" value="Chromosome 1"/>
</dbReference>
<dbReference type="Proteomes" id="UP000059680">
    <property type="component" value="Chromosome 1"/>
</dbReference>
<dbReference type="GO" id="GO:0055028">
    <property type="term" value="C:cortical microtubule"/>
    <property type="evidence" value="ECO:0000318"/>
    <property type="project" value="GO_Central"/>
</dbReference>
<dbReference type="GO" id="GO:0005524">
    <property type="term" value="F:ATP binding"/>
    <property type="evidence" value="ECO:0007669"/>
    <property type="project" value="UniProtKB-KW"/>
</dbReference>
<dbReference type="GO" id="GO:0106310">
    <property type="term" value="F:protein serine kinase activity"/>
    <property type="evidence" value="ECO:0007669"/>
    <property type="project" value="RHEA"/>
</dbReference>
<dbReference type="GO" id="GO:0004674">
    <property type="term" value="F:protein serine/threonine kinase activity"/>
    <property type="evidence" value="ECO:0000318"/>
    <property type="project" value="GO_Central"/>
</dbReference>
<dbReference type="GO" id="GO:0007017">
    <property type="term" value="P:microtubule-based process"/>
    <property type="evidence" value="ECO:0000318"/>
    <property type="project" value="GO_Central"/>
</dbReference>
<dbReference type="CDD" id="cd08215">
    <property type="entry name" value="STKc_Nek"/>
    <property type="match status" value="1"/>
</dbReference>
<dbReference type="FunFam" id="3.30.200.20:FF:000108">
    <property type="entry name" value="Serine/threonine-protein kinase Nek2"/>
    <property type="match status" value="1"/>
</dbReference>
<dbReference type="FunFam" id="1.10.510.10:FF:000504">
    <property type="entry name" value="Serine/threonine-protein kinase Nek5"/>
    <property type="match status" value="1"/>
</dbReference>
<dbReference type="Gene3D" id="3.30.200.20">
    <property type="entry name" value="Phosphorylase Kinase, domain 1"/>
    <property type="match status" value="1"/>
</dbReference>
<dbReference type="Gene3D" id="1.10.510.10">
    <property type="entry name" value="Transferase(Phosphotransferase) domain 1"/>
    <property type="match status" value="1"/>
</dbReference>
<dbReference type="InterPro" id="IPR011009">
    <property type="entry name" value="Kinase-like_dom_sf"/>
</dbReference>
<dbReference type="InterPro" id="IPR050660">
    <property type="entry name" value="NEK_Ser/Thr_kinase"/>
</dbReference>
<dbReference type="InterPro" id="IPR000719">
    <property type="entry name" value="Prot_kinase_dom"/>
</dbReference>
<dbReference type="InterPro" id="IPR017441">
    <property type="entry name" value="Protein_kinase_ATP_BS"/>
</dbReference>
<dbReference type="InterPro" id="IPR008271">
    <property type="entry name" value="Ser/Thr_kinase_AS"/>
</dbReference>
<dbReference type="PANTHER" id="PTHR43671">
    <property type="entry name" value="SERINE/THREONINE-PROTEIN KINASE NEK"/>
    <property type="match status" value="1"/>
</dbReference>
<dbReference type="PANTHER" id="PTHR43671:SF98">
    <property type="entry name" value="SERINE_THREONINE-PROTEIN KINASE NEK11"/>
    <property type="match status" value="1"/>
</dbReference>
<dbReference type="Pfam" id="PF00069">
    <property type="entry name" value="Pkinase"/>
    <property type="match status" value="1"/>
</dbReference>
<dbReference type="SMART" id="SM00220">
    <property type="entry name" value="S_TKc"/>
    <property type="match status" value="1"/>
</dbReference>
<dbReference type="SUPFAM" id="SSF56112">
    <property type="entry name" value="Protein kinase-like (PK-like)"/>
    <property type="match status" value="1"/>
</dbReference>
<dbReference type="PROSITE" id="PS00107">
    <property type="entry name" value="PROTEIN_KINASE_ATP"/>
    <property type="match status" value="1"/>
</dbReference>
<dbReference type="PROSITE" id="PS50011">
    <property type="entry name" value="PROTEIN_KINASE_DOM"/>
    <property type="match status" value="1"/>
</dbReference>
<dbReference type="PROSITE" id="PS00108">
    <property type="entry name" value="PROTEIN_KINASE_ST"/>
    <property type="match status" value="1"/>
</dbReference>
<accession>Q94CU5</accession>
<accession>Q0JHG8</accession>
<evidence type="ECO:0000255" key="1">
    <source>
        <dbReference type="PROSITE-ProRule" id="PRU00159"/>
    </source>
</evidence>
<evidence type="ECO:0000255" key="2">
    <source>
        <dbReference type="PROSITE-ProRule" id="PRU10027"/>
    </source>
</evidence>
<evidence type="ECO:0000256" key="3">
    <source>
        <dbReference type="SAM" id="MobiDB-lite"/>
    </source>
</evidence>
<evidence type="ECO:0000269" key="4">
    <source>
    </source>
</evidence>
<evidence type="ECO:0000303" key="5">
    <source>
    </source>
</evidence>
<evidence type="ECO:0000305" key="6"/>
<evidence type="ECO:0000305" key="7">
    <source>
    </source>
</evidence>
<evidence type="ECO:0000312" key="8">
    <source>
        <dbReference type="EMBL" id="BAB63817.1"/>
    </source>
</evidence>
<evidence type="ECO:0000312" key="9">
    <source>
        <dbReference type="EMBL" id="BAC01197.1"/>
    </source>
</evidence>
<evidence type="ECO:0000312" key="10">
    <source>
        <dbReference type="EMBL" id="BAF06810.2"/>
    </source>
</evidence>
<evidence type="ECO:0000312" key="11">
    <source>
        <dbReference type="EMBL" id="EAZ14261.1"/>
    </source>
</evidence>
<comment type="function">
    <text evidence="7">May be involved in plant development processes.</text>
</comment>
<comment type="catalytic activity">
    <reaction evidence="6">
        <text>L-seryl-[protein] + ATP = O-phospho-L-seryl-[protein] + ADP + H(+)</text>
        <dbReference type="Rhea" id="RHEA:17989"/>
        <dbReference type="Rhea" id="RHEA-COMP:9863"/>
        <dbReference type="Rhea" id="RHEA-COMP:11604"/>
        <dbReference type="ChEBI" id="CHEBI:15378"/>
        <dbReference type="ChEBI" id="CHEBI:29999"/>
        <dbReference type="ChEBI" id="CHEBI:30616"/>
        <dbReference type="ChEBI" id="CHEBI:83421"/>
        <dbReference type="ChEBI" id="CHEBI:456216"/>
        <dbReference type="EC" id="2.7.11.1"/>
    </reaction>
</comment>
<comment type="catalytic activity">
    <reaction evidence="6">
        <text>L-threonyl-[protein] + ATP = O-phospho-L-threonyl-[protein] + ADP + H(+)</text>
        <dbReference type="Rhea" id="RHEA:46608"/>
        <dbReference type="Rhea" id="RHEA-COMP:11060"/>
        <dbReference type="Rhea" id="RHEA-COMP:11605"/>
        <dbReference type="ChEBI" id="CHEBI:15378"/>
        <dbReference type="ChEBI" id="CHEBI:30013"/>
        <dbReference type="ChEBI" id="CHEBI:30616"/>
        <dbReference type="ChEBI" id="CHEBI:61977"/>
        <dbReference type="ChEBI" id="CHEBI:456216"/>
        <dbReference type="EC" id="2.7.11.1"/>
    </reaction>
</comment>
<comment type="tissue specificity">
    <text evidence="4">Expressed in anthers, pistils and leaves.</text>
</comment>
<comment type="similarity">
    <text evidence="6">Belongs to the protein kinase superfamily. NEK Ser/Thr protein kinase family. NIMA subfamily.</text>
</comment>
<comment type="sequence caution" evidence="6">
    <conflict type="erroneous gene model prediction">
        <sequence resource="EMBL-CDS" id="BAF06810"/>
    </conflict>
</comment>
<gene>
    <name evidence="5" type="primary">NEK5</name>
    <name evidence="10" type="ordered locus">Os01g0864700</name>
    <name evidence="6" type="ordered locus">LOC_Os01g64490</name>
    <name evidence="11" type="ORF">OsJ_004086</name>
    <name evidence="8" type="ORF">P0423B08.37</name>
    <name evidence="9" type="ORF">P0505D12.3</name>
</gene>
<reference key="1">
    <citation type="journal article" date="2002" name="Nature">
        <title>The genome sequence and structure of rice chromosome 1.</title>
        <authorList>
            <person name="Sasaki T."/>
            <person name="Matsumoto T."/>
            <person name="Yamamoto K."/>
            <person name="Sakata K."/>
            <person name="Baba T."/>
            <person name="Katayose Y."/>
            <person name="Wu J."/>
            <person name="Niimura Y."/>
            <person name="Cheng Z."/>
            <person name="Nagamura Y."/>
            <person name="Antonio B.A."/>
            <person name="Kanamori H."/>
            <person name="Hosokawa S."/>
            <person name="Masukawa M."/>
            <person name="Arikawa K."/>
            <person name="Chiden Y."/>
            <person name="Hayashi M."/>
            <person name="Okamoto M."/>
            <person name="Ando T."/>
            <person name="Aoki H."/>
            <person name="Arita K."/>
            <person name="Hamada M."/>
            <person name="Harada C."/>
            <person name="Hijishita S."/>
            <person name="Honda M."/>
            <person name="Ichikawa Y."/>
            <person name="Idonuma A."/>
            <person name="Iijima M."/>
            <person name="Ikeda M."/>
            <person name="Ikeno M."/>
            <person name="Ito S."/>
            <person name="Ito T."/>
            <person name="Ito Y."/>
            <person name="Ito Y."/>
            <person name="Iwabuchi A."/>
            <person name="Kamiya K."/>
            <person name="Karasawa W."/>
            <person name="Katagiri S."/>
            <person name="Kikuta A."/>
            <person name="Kobayashi N."/>
            <person name="Kono I."/>
            <person name="Machita K."/>
            <person name="Maehara T."/>
            <person name="Mizuno H."/>
            <person name="Mizubayashi T."/>
            <person name="Mukai Y."/>
            <person name="Nagasaki H."/>
            <person name="Nakashima M."/>
            <person name="Nakama Y."/>
            <person name="Nakamichi Y."/>
            <person name="Nakamura M."/>
            <person name="Namiki N."/>
            <person name="Negishi M."/>
            <person name="Ohta I."/>
            <person name="Ono N."/>
            <person name="Saji S."/>
            <person name="Sakai K."/>
            <person name="Shibata M."/>
            <person name="Shimokawa T."/>
            <person name="Shomura A."/>
            <person name="Song J."/>
            <person name="Takazaki Y."/>
            <person name="Terasawa K."/>
            <person name="Tsuji K."/>
            <person name="Waki K."/>
            <person name="Yamagata H."/>
            <person name="Yamane H."/>
            <person name="Yoshiki S."/>
            <person name="Yoshihara R."/>
            <person name="Yukawa K."/>
            <person name="Zhong H."/>
            <person name="Iwama H."/>
            <person name="Endo T."/>
            <person name="Ito H."/>
            <person name="Hahn J.H."/>
            <person name="Kim H.-I."/>
            <person name="Eun M.-Y."/>
            <person name="Yano M."/>
            <person name="Jiang J."/>
            <person name="Gojobori T."/>
        </authorList>
    </citation>
    <scope>NUCLEOTIDE SEQUENCE [LARGE SCALE GENOMIC DNA]</scope>
    <source>
        <strain>cv. Nipponbare</strain>
    </source>
</reference>
<reference key="2">
    <citation type="journal article" date="2005" name="Nature">
        <title>The map-based sequence of the rice genome.</title>
        <authorList>
            <consortium name="International rice genome sequencing project (IRGSP)"/>
        </authorList>
    </citation>
    <scope>NUCLEOTIDE SEQUENCE [LARGE SCALE GENOMIC DNA]</scope>
    <source>
        <strain>cv. Nipponbare</strain>
    </source>
</reference>
<reference key="3">
    <citation type="journal article" date="2008" name="Nucleic Acids Res.">
        <title>The rice annotation project database (RAP-DB): 2008 update.</title>
        <authorList>
            <consortium name="The rice annotation project (RAP)"/>
        </authorList>
    </citation>
    <scope>GENOME REANNOTATION</scope>
    <source>
        <strain>cv. Nipponbare</strain>
    </source>
</reference>
<reference key="4">
    <citation type="journal article" date="2013" name="Rice">
        <title>Improvement of the Oryza sativa Nipponbare reference genome using next generation sequence and optical map data.</title>
        <authorList>
            <person name="Kawahara Y."/>
            <person name="de la Bastide M."/>
            <person name="Hamilton J.P."/>
            <person name="Kanamori H."/>
            <person name="McCombie W.R."/>
            <person name="Ouyang S."/>
            <person name="Schwartz D.C."/>
            <person name="Tanaka T."/>
            <person name="Wu J."/>
            <person name="Zhou S."/>
            <person name="Childs K.L."/>
            <person name="Davidson R.M."/>
            <person name="Lin H."/>
            <person name="Quesada-Ocampo L."/>
            <person name="Vaillancourt B."/>
            <person name="Sakai H."/>
            <person name="Lee S.S."/>
            <person name="Kim J."/>
            <person name="Numa H."/>
            <person name="Itoh T."/>
            <person name="Buell C.R."/>
            <person name="Matsumoto T."/>
        </authorList>
    </citation>
    <scope>GENOME REANNOTATION</scope>
    <source>
        <strain>cv. Nipponbare</strain>
    </source>
</reference>
<reference key="5">
    <citation type="journal article" date="2005" name="PLoS Biol.">
        <title>The genomes of Oryza sativa: a history of duplications.</title>
        <authorList>
            <person name="Yu J."/>
            <person name="Wang J."/>
            <person name="Lin W."/>
            <person name="Li S."/>
            <person name="Li H."/>
            <person name="Zhou J."/>
            <person name="Ni P."/>
            <person name="Dong W."/>
            <person name="Hu S."/>
            <person name="Zeng C."/>
            <person name="Zhang J."/>
            <person name="Zhang Y."/>
            <person name="Li R."/>
            <person name="Xu Z."/>
            <person name="Li S."/>
            <person name="Li X."/>
            <person name="Zheng H."/>
            <person name="Cong L."/>
            <person name="Lin L."/>
            <person name="Yin J."/>
            <person name="Geng J."/>
            <person name="Li G."/>
            <person name="Shi J."/>
            <person name="Liu J."/>
            <person name="Lv H."/>
            <person name="Li J."/>
            <person name="Wang J."/>
            <person name="Deng Y."/>
            <person name="Ran L."/>
            <person name="Shi X."/>
            <person name="Wang X."/>
            <person name="Wu Q."/>
            <person name="Li C."/>
            <person name="Ren X."/>
            <person name="Wang J."/>
            <person name="Wang X."/>
            <person name="Li D."/>
            <person name="Liu D."/>
            <person name="Zhang X."/>
            <person name="Ji Z."/>
            <person name="Zhao W."/>
            <person name="Sun Y."/>
            <person name="Zhang Z."/>
            <person name="Bao J."/>
            <person name="Han Y."/>
            <person name="Dong L."/>
            <person name="Ji J."/>
            <person name="Chen P."/>
            <person name="Wu S."/>
            <person name="Liu J."/>
            <person name="Xiao Y."/>
            <person name="Bu D."/>
            <person name="Tan J."/>
            <person name="Yang L."/>
            <person name="Ye C."/>
            <person name="Zhang J."/>
            <person name="Xu J."/>
            <person name="Zhou Y."/>
            <person name="Yu Y."/>
            <person name="Zhang B."/>
            <person name="Zhuang S."/>
            <person name="Wei H."/>
            <person name="Liu B."/>
            <person name="Lei M."/>
            <person name="Yu H."/>
            <person name="Li Y."/>
            <person name="Xu H."/>
            <person name="Wei S."/>
            <person name="He X."/>
            <person name="Fang L."/>
            <person name="Zhang Z."/>
            <person name="Zhang Y."/>
            <person name="Huang X."/>
            <person name="Su Z."/>
            <person name="Tong W."/>
            <person name="Li J."/>
            <person name="Tong Z."/>
            <person name="Li S."/>
            <person name="Ye J."/>
            <person name="Wang L."/>
            <person name="Fang L."/>
            <person name="Lei T."/>
            <person name="Chen C.-S."/>
            <person name="Chen H.-C."/>
            <person name="Xu Z."/>
            <person name="Li H."/>
            <person name="Huang H."/>
            <person name="Zhang F."/>
            <person name="Xu H."/>
            <person name="Li N."/>
            <person name="Zhao C."/>
            <person name="Li S."/>
            <person name="Dong L."/>
            <person name="Huang Y."/>
            <person name="Li L."/>
            <person name="Xi Y."/>
            <person name="Qi Q."/>
            <person name="Li W."/>
            <person name="Zhang B."/>
            <person name="Hu W."/>
            <person name="Zhang Y."/>
            <person name="Tian X."/>
            <person name="Jiao Y."/>
            <person name="Liang X."/>
            <person name="Jin J."/>
            <person name="Gao L."/>
            <person name="Zheng W."/>
            <person name="Hao B."/>
            <person name="Liu S.-M."/>
            <person name="Wang W."/>
            <person name="Yuan L."/>
            <person name="Cao M."/>
            <person name="McDermott J."/>
            <person name="Samudrala R."/>
            <person name="Wang J."/>
            <person name="Wong G.K.-S."/>
            <person name="Yang H."/>
        </authorList>
    </citation>
    <scope>NUCLEOTIDE SEQUENCE [LARGE SCALE GENOMIC DNA]</scope>
    <source>
        <strain>cv. Nipponbare</strain>
    </source>
</reference>
<reference key="6">
    <citation type="journal article" date="2007" name="Plant J.">
        <title>Members of the plant NIMA-related kinases are involved in organ development and vascularization in poplar, Arabidopsis and rice.</title>
        <authorList>
            <person name="Vigneault F."/>
            <person name="Lachance D."/>
            <person name="Cloutier M."/>
            <person name="Pelletier G."/>
            <person name="Levasseur C."/>
            <person name="Seguin A."/>
        </authorList>
    </citation>
    <scope>FUNCTION</scope>
    <scope>GENE FAMILY</scope>
    <scope>NOMENCLATURE</scope>
</reference>
<reference key="7">
    <citation type="journal article" date="2009" name="Plant Cell Physiol.">
        <title>Cytoplasmic male sterility-related protein kinase, OsNek3, is regulated downstream of mitochondrial protein phosphatase 2C, DCW11.</title>
        <authorList>
            <person name="Fujii S."/>
            <person name="Yamada M."/>
            <person name="Toriyama K."/>
        </authorList>
    </citation>
    <scope>TISSUE SPECIFICITY</scope>
</reference>
<organism>
    <name type="scientific">Oryza sativa subsp. japonica</name>
    <name type="common">Rice</name>
    <dbReference type="NCBI Taxonomy" id="39947"/>
    <lineage>
        <taxon>Eukaryota</taxon>
        <taxon>Viridiplantae</taxon>
        <taxon>Streptophyta</taxon>
        <taxon>Embryophyta</taxon>
        <taxon>Tracheophyta</taxon>
        <taxon>Spermatophyta</taxon>
        <taxon>Magnoliopsida</taxon>
        <taxon>Liliopsida</taxon>
        <taxon>Poales</taxon>
        <taxon>Poaceae</taxon>
        <taxon>BOP clade</taxon>
        <taxon>Oryzoideae</taxon>
        <taxon>Oryzeae</taxon>
        <taxon>Oryzinae</taxon>
        <taxon>Oryza</taxon>
        <taxon>Oryza sativa</taxon>
    </lineage>
</organism>
<name>NEK5_ORYSJ</name>
<protein>
    <recommendedName>
        <fullName evidence="6">Serine/threonine-protein kinase Nek5</fullName>
        <ecNumber evidence="6">2.7.11.1</ecNumber>
    </recommendedName>
    <alternativeName>
        <fullName evidence="5">NimA-related protein kinase 5</fullName>
    </alternativeName>
    <alternativeName>
        <fullName evidence="5">OsNek5</fullName>
    </alternativeName>
</protein>
<sequence>MDSRMDQYEVMEQIGRGAFGAAILVNHKTEKKKYVLKKIRLARQTERCRKSAHQEMALIARLQHPYIVEFKEAWVEKGCYVCIVTGYCEGGDMAELMKKANGTYFPEEKLLKWFAQLALAVDYLHSNFVLHRDLKCSNIFLTKDQDIRLGDFGLAKTLKADDLTSSVVGTPNYMCPELLADIPYGFKSDIWSLGCCMYEMAAHRPAFKAFDMAGLISKINRSSIGPLPPCYSPSMKSLIKSMLRKSPEHRPTASEILKSPYLQPYVNQYRPFADISHPIHSLEKPITSSRSSQKSMSGSQCSSISGSDIDSIQSSERNTSGPSTSSNNTIDTEGAEATDHVSVKNCSRSDDVKSNKETVGPELERQDSSKSIHVDQRPRNEIKQPKIIKKILTTLREESKLRQNNSPIRASRVKLNSPSNREQLSDDSKHSSDISSSSKSSEVTSRESAKVICEPVKRAQASPPLKHLSPIVEHSPKAKIKQDEPLQPDPAKQAMEDVDAAVGKVKNRTPPSYSRRLSIPPRRPLGAESPLHADTKRAHNKVIKERAKSPCRPVHGPDNDIIEPPGFPMAPPSPLGGVQMKVGNARAKSAPPRAVSIKEDSSDCSSSTIAYAENTELSEPSKQDSSAQLVSSCKCSIPDAAIQKHDLTAMPSSELNTTNFQKSMASNDDVCENLALEPSSDISEQVSIFKDNVPCSKISQSTANAIVQNDEDKFTVQELLSSVADIAPFVSTKNFALEKGSPPIQSLERTSSPHLNPPIEDVIHVIRHSSFRVCGEQAVAENAEMGVQSSDVGKLLNVVREEVDSRSIPSNNLVPHRLPDCAAPKPNISETNTISSKTACSDVVKFLTVPEVNSTTTAINNGFKEEASPTKEILDVKSFRQRAEALEGLLELSADLLQHNRLEELAVVLKPFGKDKVSPRETAIWLAKSFKGMMNDEASRSSM</sequence>
<keyword id="KW-0067">ATP-binding</keyword>
<keyword id="KW-0418">Kinase</keyword>
<keyword id="KW-0547">Nucleotide-binding</keyword>
<keyword id="KW-1185">Reference proteome</keyword>
<keyword id="KW-0723">Serine/threonine-protein kinase</keyword>
<keyword id="KW-0808">Transferase</keyword>